<comment type="function">
    <text evidence="1">One of the primary rRNA binding proteins. Required for association of the 30S and 50S subunits to form the 70S ribosome, for tRNA binding and peptide bond formation. It has been suggested to have peptidyltransferase activity; this is somewhat controversial. Makes several contacts with the 16S rRNA in the 70S ribosome.</text>
</comment>
<comment type="subunit">
    <text evidence="1">Part of the 50S ribosomal subunit. Forms a bridge to the 30S subunit in the 70S ribosome.</text>
</comment>
<comment type="similarity">
    <text evidence="1">Belongs to the universal ribosomal protein uL2 family.</text>
</comment>
<keyword id="KW-1185">Reference proteome</keyword>
<keyword id="KW-0687">Ribonucleoprotein</keyword>
<keyword id="KW-0689">Ribosomal protein</keyword>
<keyword id="KW-0694">RNA-binding</keyword>
<keyword id="KW-0699">rRNA-binding</keyword>
<gene>
    <name evidence="1" type="primary">rplB</name>
    <name type="ordered locus">OEOE_0598</name>
</gene>
<accession>Q04G82</accession>
<feature type="chain" id="PRO_0000309972" description="Large ribosomal subunit protein uL2">
    <location>
        <begin position="1"/>
        <end position="279"/>
    </location>
</feature>
<feature type="region of interest" description="Disordered" evidence="2">
    <location>
        <begin position="211"/>
        <end position="279"/>
    </location>
</feature>
<feature type="compositionally biased region" description="Basic residues" evidence="2">
    <location>
        <begin position="211"/>
        <end position="221"/>
    </location>
</feature>
<feature type="compositionally biased region" description="Basic residues" evidence="2">
    <location>
        <begin position="256"/>
        <end position="279"/>
    </location>
</feature>
<evidence type="ECO:0000255" key="1">
    <source>
        <dbReference type="HAMAP-Rule" id="MF_01320"/>
    </source>
</evidence>
<evidence type="ECO:0000256" key="2">
    <source>
        <dbReference type="SAM" id="MobiDB-lite"/>
    </source>
</evidence>
<evidence type="ECO:0000305" key="3"/>
<dbReference type="EMBL" id="CP000411">
    <property type="protein sequence ID" value="ABJ56540.1"/>
    <property type="molecule type" value="Genomic_DNA"/>
</dbReference>
<dbReference type="RefSeq" id="WP_002818457.1">
    <property type="nucleotide sequence ID" value="NC_008528.1"/>
</dbReference>
<dbReference type="SMR" id="Q04G82"/>
<dbReference type="STRING" id="203123.OEOE_0598"/>
<dbReference type="GeneID" id="75065420"/>
<dbReference type="KEGG" id="ooe:OEOE_0598"/>
<dbReference type="eggNOG" id="COG0090">
    <property type="taxonomic scope" value="Bacteria"/>
</dbReference>
<dbReference type="HOGENOM" id="CLU_036235_2_1_9"/>
<dbReference type="Proteomes" id="UP000000774">
    <property type="component" value="Chromosome"/>
</dbReference>
<dbReference type="GO" id="GO:0015934">
    <property type="term" value="C:large ribosomal subunit"/>
    <property type="evidence" value="ECO:0007669"/>
    <property type="project" value="InterPro"/>
</dbReference>
<dbReference type="GO" id="GO:0019843">
    <property type="term" value="F:rRNA binding"/>
    <property type="evidence" value="ECO:0007669"/>
    <property type="project" value="UniProtKB-UniRule"/>
</dbReference>
<dbReference type="GO" id="GO:0003735">
    <property type="term" value="F:structural constituent of ribosome"/>
    <property type="evidence" value="ECO:0007669"/>
    <property type="project" value="InterPro"/>
</dbReference>
<dbReference type="GO" id="GO:0016740">
    <property type="term" value="F:transferase activity"/>
    <property type="evidence" value="ECO:0007669"/>
    <property type="project" value="InterPro"/>
</dbReference>
<dbReference type="GO" id="GO:0002181">
    <property type="term" value="P:cytoplasmic translation"/>
    <property type="evidence" value="ECO:0007669"/>
    <property type="project" value="TreeGrafter"/>
</dbReference>
<dbReference type="FunFam" id="2.30.30.30:FF:000001">
    <property type="entry name" value="50S ribosomal protein L2"/>
    <property type="match status" value="1"/>
</dbReference>
<dbReference type="FunFam" id="2.40.50.140:FF:000003">
    <property type="entry name" value="50S ribosomal protein L2"/>
    <property type="match status" value="1"/>
</dbReference>
<dbReference type="FunFam" id="4.10.950.10:FF:000001">
    <property type="entry name" value="50S ribosomal protein L2"/>
    <property type="match status" value="1"/>
</dbReference>
<dbReference type="Gene3D" id="2.30.30.30">
    <property type="match status" value="1"/>
</dbReference>
<dbReference type="Gene3D" id="2.40.50.140">
    <property type="entry name" value="Nucleic acid-binding proteins"/>
    <property type="match status" value="1"/>
</dbReference>
<dbReference type="Gene3D" id="4.10.950.10">
    <property type="entry name" value="Ribosomal protein L2, domain 3"/>
    <property type="match status" value="1"/>
</dbReference>
<dbReference type="HAMAP" id="MF_01320_B">
    <property type="entry name" value="Ribosomal_uL2_B"/>
    <property type="match status" value="1"/>
</dbReference>
<dbReference type="InterPro" id="IPR012340">
    <property type="entry name" value="NA-bd_OB-fold"/>
</dbReference>
<dbReference type="InterPro" id="IPR014722">
    <property type="entry name" value="Rib_uL2_dom2"/>
</dbReference>
<dbReference type="InterPro" id="IPR002171">
    <property type="entry name" value="Ribosomal_uL2"/>
</dbReference>
<dbReference type="InterPro" id="IPR005880">
    <property type="entry name" value="Ribosomal_uL2_bac/org-type"/>
</dbReference>
<dbReference type="InterPro" id="IPR022669">
    <property type="entry name" value="Ribosomal_uL2_C"/>
</dbReference>
<dbReference type="InterPro" id="IPR022671">
    <property type="entry name" value="Ribosomal_uL2_CS"/>
</dbReference>
<dbReference type="InterPro" id="IPR014726">
    <property type="entry name" value="Ribosomal_uL2_dom3"/>
</dbReference>
<dbReference type="InterPro" id="IPR022666">
    <property type="entry name" value="Ribosomal_uL2_RNA-bd_dom"/>
</dbReference>
<dbReference type="InterPro" id="IPR008991">
    <property type="entry name" value="Translation_prot_SH3-like_sf"/>
</dbReference>
<dbReference type="NCBIfam" id="TIGR01171">
    <property type="entry name" value="rplB_bact"/>
    <property type="match status" value="1"/>
</dbReference>
<dbReference type="PANTHER" id="PTHR13691:SF5">
    <property type="entry name" value="LARGE RIBOSOMAL SUBUNIT PROTEIN UL2M"/>
    <property type="match status" value="1"/>
</dbReference>
<dbReference type="PANTHER" id="PTHR13691">
    <property type="entry name" value="RIBOSOMAL PROTEIN L2"/>
    <property type="match status" value="1"/>
</dbReference>
<dbReference type="Pfam" id="PF00181">
    <property type="entry name" value="Ribosomal_L2"/>
    <property type="match status" value="1"/>
</dbReference>
<dbReference type="Pfam" id="PF03947">
    <property type="entry name" value="Ribosomal_L2_C"/>
    <property type="match status" value="1"/>
</dbReference>
<dbReference type="PIRSF" id="PIRSF002158">
    <property type="entry name" value="Ribosomal_L2"/>
    <property type="match status" value="1"/>
</dbReference>
<dbReference type="SMART" id="SM01383">
    <property type="entry name" value="Ribosomal_L2"/>
    <property type="match status" value="1"/>
</dbReference>
<dbReference type="SMART" id="SM01382">
    <property type="entry name" value="Ribosomal_L2_C"/>
    <property type="match status" value="1"/>
</dbReference>
<dbReference type="SUPFAM" id="SSF50249">
    <property type="entry name" value="Nucleic acid-binding proteins"/>
    <property type="match status" value="1"/>
</dbReference>
<dbReference type="SUPFAM" id="SSF50104">
    <property type="entry name" value="Translation proteins SH3-like domain"/>
    <property type="match status" value="1"/>
</dbReference>
<dbReference type="PROSITE" id="PS00467">
    <property type="entry name" value="RIBOSOMAL_L2"/>
    <property type="match status" value="1"/>
</dbReference>
<sequence>MAIKTYKPTTNGRRNMSGFDFSVITKTTPEKSLLAKKSKTGARNAEGRMTVRHHGGGHKQQYRIIDFKRIKDDKTATVKAIEYDPNRTANIALLVYEDGVKSYILAPKGLEAGTKVQSGPDADIKVGNALPLGNIPEGTLIHNIELKPGKGGQLARSAGTSAQILGKDDAGKYVIIRLSSGEVRMIPATSRATIGEVGNAEHSLISWGKAGRSRWRGKTPHVRGSVMNPNDHPHGGGEGKAPVGHPSPMSPWGKKSYGKKTRDKKKPSTKFIVRGRKGK</sequence>
<protein>
    <recommendedName>
        <fullName evidence="1">Large ribosomal subunit protein uL2</fullName>
    </recommendedName>
    <alternativeName>
        <fullName evidence="3">50S ribosomal protein L2</fullName>
    </alternativeName>
</protein>
<name>RL2_OENOB</name>
<proteinExistence type="inferred from homology"/>
<reference key="1">
    <citation type="journal article" date="2006" name="Proc. Natl. Acad. Sci. U.S.A.">
        <title>Comparative genomics of the lactic acid bacteria.</title>
        <authorList>
            <person name="Makarova K.S."/>
            <person name="Slesarev A."/>
            <person name="Wolf Y.I."/>
            <person name="Sorokin A."/>
            <person name="Mirkin B."/>
            <person name="Koonin E.V."/>
            <person name="Pavlov A."/>
            <person name="Pavlova N."/>
            <person name="Karamychev V."/>
            <person name="Polouchine N."/>
            <person name="Shakhova V."/>
            <person name="Grigoriev I."/>
            <person name="Lou Y."/>
            <person name="Rohksar D."/>
            <person name="Lucas S."/>
            <person name="Huang K."/>
            <person name="Goodstein D.M."/>
            <person name="Hawkins T."/>
            <person name="Plengvidhya V."/>
            <person name="Welker D."/>
            <person name="Hughes J."/>
            <person name="Goh Y."/>
            <person name="Benson A."/>
            <person name="Baldwin K."/>
            <person name="Lee J.-H."/>
            <person name="Diaz-Muniz I."/>
            <person name="Dosti B."/>
            <person name="Smeianov V."/>
            <person name="Wechter W."/>
            <person name="Barabote R."/>
            <person name="Lorca G."/>
            <person name="Altermann E."/>
            <person name="Barrangou R."/>
            <person name="Ganesan B."/>
            <person name="Xie Y."/>
            <person name="Rawsthorne H."/>
            <person name="Tamir D."/>
            <person name="Parker C."/>
            <person name="Breidt F."/>
            <person name="Broadbent J.R."/>
            <person name="Hutkins R."/>
            <person name="O'Sullivan D."/>
            <person name="Steele J."/>
            <person name="Unlu G."/>
            <person name="Saier M.H. Jr."/>
            <person name="Klaenhammer T."/>
            <person name="Richardson P."/>
            <person name="Kozyavkin S."/>
            <person name="Weimer B.C."/>
            <person name="Mills D.A."/>
        </authorList>
    </citation>
    <scope>NUCLEOTIDE SEQUENCE [LARGE SCALE GENOMIC DNA]</scope>
    <source>
        <strain>ATCC BAA-331 / PSU-1</strain>
    </source>
</reference>
<organism>
    <name type="scientific">Oenococcus oeni (strain ATCC BAA-331 / PSU-1)</name>
    <dbReference type="NCBI Taxonomy" id="203123"/>
    <lineage>
        <taxon>Bacteria</taxon>
        <taxon>Bacillati</taxon>
        <taxon>Bacillota</taxon>
        <taxon>Bacilli</taxon>
        <taxon>Lactobacillales</taxon>
        <taxon>Lactobacillaceae</taxon>
        <taxon>Oenococcus</taxon>
    </lineage>
</organism>